<organism>
    <name type="scientific">Coxiella burnetii (strain RSA 493 / Nine Mile phase I)</name>
    <dbReference type="NCBI Taxonomy" id="227377"/>
    <lineage>
        <taxon>Bacteria</taxon>
        <taxon>Pseudomonadati</taxon>
        <taxon>Pseudomonadota</taxon>
        <taxon>Gammaproteobacteria</taxon>
        <taxon>Legionellales</taxon>
        <taxon>Coxiellaceae</taxon>
        <taxon>Coxiella</taxon>
    </lineage>
</organism>
<feature type="chain" id="PRO_0000134750" description="6,7-dimethyl-8-ribityllumazine synthase">
    <location>
        <begin position="1"/>
        <end position="151"/>
    </location>
</feature>
<feature type="active site" description="Proton donor" evidence="1">
    <location>
        <position position="81"/>
    </location>
</feature>
<feature type="binding site" evidence="1">
    <location>
        <position position="15"/>
    </location>
    <ligand>
        <name>5-amino-6-(D-ribitylamino)uracil</name>
        <dbReference type="ChEBI" id="CHEBI:15934"/>
    </ligand>
</feature>
<feature type="binding site" evidence="1">
    <location>
        <begin position="49"/>
        <end position="51"/>
    </location>
    <ligand>
        <name>5-amino-6-(D-ribitylamino)uracil</name>
        <dbReference type="ChEBI" id="CHEBI:15934"/>
    </ligand>
</feature>
<feature type="binding site" evidence="1">
    <location>
        <begin position="73"/>
        <end position="75"/>
    </location>
    <ligand>
        <name>5-amino-6-(D-ribitylamino)uracil</name>
        <dbReference type="ChEBI" id="CHEBI:15934"/>
    </ligand>
</feature>
<feature type="binding site" evidence="1">
    <location>
        <begin position="78"/>
        <end position="79"/>
    </location>
    <ligand>
        <name>(2S)-2-hydroxy-3-oxobutyl phosphate</name>
        <dbReference type="ChEBI" id="CHEBI:58830"/>
    </ligand>
</feature>
<feature type="binding site" evidence="1">
    <location>
        <position position="106"/>
    </location>
    <ligand>
        <name>5-amino-6-(D-ribitylamino)uracil</name>
        <dbReference type="ChEBI" id="CHEBI:15934"/>
    </ligand>
</feature>
<feature type="binding site" evidence="1">
    <location>
        <position position="120"/>
    </location>
    <ligand>
        <name>(2S)-2-hydroxy-3-oxobutyl phosphate</name>
        <dbReference type="ChEBI" id="CHEBI:58830"/>
    </ligand>
</feature>
<evidence type="ECO:0000255" key="1">
    <source>
        <dbReference type="HAMAP-Rule" id="MF_00178"/>
    </source>
</evidence>
<evidence type="ECO:0000269" key="2">
    <source>
    </source>
</evidence>
<keyword id="KW-1185">Reference proteome</keyword>
<keyword id="KW-0686">Riboflavin biosynthesis</keyword>
<keyword id="KW-0808">Transferase</keyword>
<gene>
    <name evidence="1" type="primary">ribH</name>
    <name type="ordered locus">CBU_0648</name>
</gene>
<dbReference type="EC" id="2.5.1.78" evidence="1"/>
<dbReference type="EMBL" id="AE016828">
    <property type="protein sequence ID" value="AAO90192.1"/>
    <property type="molecule type" value="Genomic_DNA"/>
</dbReference>
<dbReference type="RefSeq" id="NP_819678.1">
    <property type="nucleotide sequence ID" value="NC_002971.4"/>
</dbReference>
<dbReference type="RefSeq" id="WP_010957715.1">
    <property type="nucleotide sequence ID" value="NZ_CCYB01000048.1"/>
</dbReference>
<dbReference type="SMR" id="Q83DP8"/>
<dbReference type="STRING" id="227377.CBU_0648"/>
<dbReference type="EnsemblBacteria" id="AAO90192">
    <property type="protein sequence ID" value="AAO90192"/>
    <property type="gene ID" value="CBU_0648"/>
</dbReference>
<dbReference type="GeneID" id="1208533"/>
<dbReference type="KEGG" id="cbu:CBU_0648"/>
<dbReference type="PATRIC" id="fig|227377.7.peg.632"/>
<dbReference type="eggNOG" id="COG0054">
    <property type="taxonomic scope" value="Bacteria"/>
</dbReference>
<dbReference type="HOGENOM" id="CLU_089358_1_1_6"/>
<dbReference type="OrthoDB" id="9809709at2"/>
<dbReference type="UniPathway" id="UPA00275">
    <property type="reaction ID" value="UER00404"/>
</dbReference>
<dbReference type="Proteomes" id="UP000002671">
    <property type="component" value="Chromosome"/>
</dbReference>
<dbReference type="GO" id="GO:0005737">
    <property type="term" value="C:cytoplasm"/>
    <property type="evidence" value="ECO:0000318"/>
    <property type="project" value="GO_Central"/>
</dbReference>
<dbReference type="GO" id="GO:0005829">
    <property type="term" value="C:cytosol"/>
    <property type="evidence" value="ECO:0000318"/>
    <property type="project" value="GO_Central"/>
</dbReference>
<dbReference type="GO" id="GO:0009349">
    <property type="term" value="C:riboflavin synthase complex"/>
    <property type="evidence" value="ECO:0007669"/>
    <property type="project" value="InterPro"/>
</dbReference>
<dbReference type="GO" id="GO:0000906">
    <property type="term" value="F:6,7-dimethyl-8-ribityllumazine synthase activity"/>
    <property type="evidence" value="ECO:0000318"/>
    <property type="project" value="GO_Central"/>
</dbReference>
<dbReference type="GO" id="GO:0009231">
    <property type="term" value="P:riboflavin biosynthetic process"/>
    <property type="evidence" value="ECO:0000318"/>
    <property type="project" value="GO_Central"/>
</dbReference>
<dbReference type="CDD" id="cd09209">
    <property type="entry name" value="Lumazine_synthase-I"/>
    <property type="match status" value="1"/>
</dbReference>
<dbReference type="Gene3D" id="3.40.50.960">
    <property type="entry name" value="Lumazine/riboflavin synthase"/>
    <property type="match status" value="1"/>
</dbReference>
<dbReference type="HAMAP" id="MF_00178">
    <property type="entry name" value="Lumazine_synth"/>
    <property type="match status" value="1"/>
</dbReference>
<dbReference type="InterPro" id="IPR034964">
    <property type="entry name" value="LS"/>
</dbReference>
<dbReference type="InterPro" id="IPR002180">
    <property type="entry name" value="LS/RS"/>
</dbReference>
<dbReference type="InterPro" id="IPR036467">
    <property type="entry name" value="LS/RS_sf"/>
</dbReference>
<dbReference type="NCBIfam" id="TIGR00114">
    <property type="entry name" value="lumazine-synth"/>
    <property type="match status" value="1"/>
</dbReference>
<dbReference type="PANTHER" id="PTHR21058:SF0">
    <property type="entry name" value="6,7-DIMETHYL-8-RIBITYLLUMAZINE SYNTHASE"/>
    <property type="match status" value="1"/>
</dbReference>
<dbReference type="PANTHER" id="PTHR21058">
    <property type="entry name" value="6,7-DIMETHYL-8-RIBITYLLUMAZINE SYNTHASE DMRL SYNTHASE LUMAZINE SYNTHASE"/>
    <property type="match status" value="1"/>
</dbReference>
<dbReference type="Pfam" id="PF00885">
    <property type="entry name" value="DMRL_synthase"/>
    <property type="match status" value="1"/>
</dbReference>
<dbReference type="SUPFAM" id="SSF52121">
    <property type="entry name" value="Lumazine synthase"/>
    <property type="match status" value="1"/>
</dbReference>
<name>RISB_COXBU</name>
<reference key="1">
    <citation type="journal article" date="2003" name="Proc. Natl. Acad. Sci. U.S.A.">
        <title>Complete genome sequence of the Q-fever pathogen, Coxiella burnetii.</title>
        <authorList>
            <person name="Seshadri R."/>
            <person name="Paulsen I.T."/>
            <person name="Eisen J.A."/>
            <person name="Read T.D."/>
            <person name="Nelson K.E."/>
            <person name="Nelson W.C."/>
            <person name="Ward N.L."/>
            <person name="Tettelin H."/>
            <person name="Davidsen T.M."/>
            <person name="Beanan M.J."/>
            <person name="DeBoy R.T."/>
            <person name="Daugherty S.C."/>
            <person name="Brinkac L.M."/>
            <person name="Madupu R."/>
            <person name="Dodson R.J."/>
            <person name="Khouri H.M."/>
            <person name="Lee K.H."/>
            <person name="Carty H.A."/>
            <person name="Scanlan D."/>
            <person name="Heinzen R.A."/>
            <person name="Thompson H.A."/>
            <person name="Samuel J.E."/>
            <person name="Fraser C.M."/>
            <person name="Heidelberg J.F."/>
        </authorList>
    </citation>
    <scope>NUCLEOTIDE SEQUENCE [LARGE SCALE GENOMIC DNA]</scope>
    <source>
        <strain>RSA 493 / Nine Mile phase I</strain>
    </source>
</reference>
<reference key="2">
    <citation type="journal article" date="2007" name="Infect. Immun.">
        <title>Proteome and antigen profiling of Coxiella burnetii developmental forms.</title>
        <authorList>
            <person name="Coleman S.A."/>
            <person name="Fischer E.R."/>
            <person name="Cockrell D.C."/>
            <person name="Voth D.E."/>
            <person name="Howe D."/>
            <person name="Mead D.J."/>
            <person name="Samuel J.E."/>
            <person name="Heinzen R.A."/>
        </authorList>
    </citation>
    <scope>IDENTIFICATION BY MASS SPECTROMETRY</scope>
    <scope>DEVELOPMENTAL STAGE</scope>
    <source>
        <strain>Nine Mile Crazy / RSA 514</strain>
    </source>
</reference>
<protein>
    <recommendedName>
        <fullName evidence="1">6,7-dimethyl-8-ribityllumazine synthase</fullName>
        <shortName evidence="1">DMRL synthase</shortName>
        <shortName evidence="1">LS</shortName>
        <shortName evidence="1">Lumazine synthase</shortName>
        <ecNumber evidence="1">2.5.1.78</ecNumber>
    </recommendedName>
</protein>
<proteinExistence type="evidence at protein level"/>
<sequence>MTESSFKLAIVVSQFNRAVTEKLLNGVLQRLTELGVQANQIKTVWVPGAVEIPLLAKRLAKSKHYQAVVCLGAVIRGETDHYNYVCQQVSFGCQQVALEYEVPIIFGVLTTTTKEQAFARAGGERGNKGADWADAAVSMIKLMKEIEITDE</sequence>
<accession>Q83DP8</accession>
<comment type="function">
    <text evidence="1">Catalyzes the formation of 6,7-dimethyl-8-ribityllumazine by condensation of 5-amino-6-(D-ribitylamino)uracil with 3,4-dihydroxy-2-butanone 4-phosphate. This is the penultimate step in the biosynthesis of riboflavin.</text>
</comment>
<comment type="catalytic activity">
    <reaction evidence="1">
        <text>(2S)-2-hydroxy-3-oxobutyl phosphate + 5-amino-6-(D-ribitylamino)uracil = 6,7-dimethyl-8-(1-D-ribityl)lumazine + phosphate + 2 H2O + H(+)</text>
        <dbReference type="Rhea" id="RHEA:26152"/>
        <dbReference type="ChEBI" id="CHEBI:15377"/>
        <dbReference type="ChEBI" id="CHEBI:15378"/>
        <dbReference type="ChEBI" id="CHEBI:15934"/>
        <dbReference type="ChEBI" id="CHEBI:43474"/>
        <dbReference type="ChEBI" id="CHEBI:58201"/>
        <dbReference type="ChEBI" id="CHEBI:58830"/>
        <dbReference type="EC" id="2.5.1.78"/>
    </reaction>
</comment>
<comment type="pathway">
    <text evidence="1">Cofactor biosynthesis; riboflavin biosynthesis; riboflavin from 2-hydroxy-3-oxobutyl phosphate and 5-amino-6-(D-ribitylamino)uracil: step 1/2.</text>
</comment>
<comment type="subunit">
    <text evidence="1">Forms an icosahedral capsid composed of 60 subunits, arranged as a dodecamer of pentamers.</text>
</comment>
<comment type="developmental stage">
    <text evidence="2">More than twofold more abundant in the large cell variant (LCV) stage than in the small cell variant (SCV) stage (at protein level). LCVs are more metabolically active than SCVs.</text>
</comment>
<comment type="similarity">
    <text evidence="1">Belongs to the DMRL synthase family.</text>
</comment>